<name>LEUD_SULAC</name>
<comment type="function">
    <text evidence="1">Catalyzes the isomerization between 2-isopropylmalate and 3-isopropylmalate, via the formation of 2-isopropylmaleate.</text>
</comment>
<comment type="catalytic activity">
    <reaction evidence="1">
        <text>(2R,3S)-3-isopropylmalate = (2S)-2-isopropylmalate</text>
        <dbReference type="Rhea" id="RHEA:32287"/>
        <dbReference type="ChEBI" id="CHEBI:1178"/>
        <dbReference type="ChEBI" id="CHEBI:35121"/>
        <dbReference type="EC" id="4.2.1.33"/>
    </reaction>
</comment>
<comment type="pathway">
    <text evidence="1">Amino-acid biosynthesis; L-leucine biosynthesis; L-leucine from 3-methyl-2-oxobutanoate: step 2/4.</text>
</comment>
<comment type="subunit">
    <text evidence="1">Heterodimer of LeuC and LeuD.</text>
</comment>
<comment type="similarity">
    <text evidence="1">Belongs to the LeuD family. LeuD type 2 subfamily.</text>
</comment>
<protein>
    <recommendedName>
        <fullName evidence="1">3-isopropylmalate dehydratase small subunit</fullName>
        <ecNumber evidence="1">4.2.1.33</ecNumber>
    </recommendedName>
    <alternativeName>
        <fullName evidence="1">Alpha-IPM isomerase</fullName>
        <shortName evidence="1">IPMI</shortName>
    </alternativeName>
    <alternativeName>
        <fullName evidence="1">Isopropylmalate isomerase</fullName>
    </alternativeName>
</protein>
<sequence length="161" mass="17339">MIIEAKVLKFGDKIDTDIIIPAKYLKYTDPQYLAQHAMEPLDPEFYKKASSGVIIVAGKVFGMGSSREQAAMALKAAGVKAIIAESFARIFFRNAINNGLPVITLQNATKEINQGDLVRVNVETGEIVVNGSKVLKGKGISGMPLEILITGGLITYLKKAS</sequence>
<proteinExistence type="inferred from homology"/>
<reference key="1">
    <citation type="journal article" date="2005" name="J. Bacteriol.">
        <title>The genome of Sulfolobus acidocaldarius, a model organism of the Crenarchaeota.</title>
        <authorList>
            <person name="Chen L."/>
            <person name="Bruegger K."/>
            <person name="Skovgaard M."/>
            <person name="Redder P."/>
            <person name="She Q."/>
            <person name="Torarinsson E."/>
            <person name="Greve B."/>
            <person name="Awayez M."/>
            <person name="Zibat A."/>
            <person name="Klenk H.-P."/>
            <person name="Garrett R.A."/>
        </authorList>
    </citation>
    <scope>NUCLEOTIDE SEQUENCE [LARGE SCALE GENOMIC DNA]</scope>
    <source>
        <strain>ATCC 33909 / DSM 639 / JCM 8929 / NBRC 15157 / NCIMB 11770</strain>
    </source>
</reference>
<organism>
    <name type="scientific">Sulfolobus acidocaldarius (strain ATCC 33909 / DSM 639 / JCM 8929 / NBRC 15157 / NCIMB 11770)</name>
    <dbReference type="NCBI Taxonomy" id="330779"/>
    <lineage>
        <taxon>Archaea</taxon>
        <taxon>Thermoproteota</taxon>
        <taxon>Thermoprotei</taxon>
        <taxon>Sulfolobales</taxon>
        <taxon>Sulfolobaceae</taxon>
        <taxon>Sulfolobus</taxon>
    </lineage>
</organism>
<dbReference type="EC" id="4.2.1.33" evidence="1"/>
<dbReference type="EMBL" id="CP000077">
    <property type="protein sequence ID" value="AAY79669.1"/>
    <property type="molecule type" value="Genomic_DNA"/>
</dbReference>
<dbReference type="RefSeq" id="WP_011277171.1">
    <property type="nucleotide sequence ID" value="NC_007181.1"/>
</dbReference>
<dbReference type="SMR" id="Q4JC10"/>
<dbReference type="STRING" id="330779.Saci_0252"/>
<dbReference type="GeneID" id="14550782"/>
<dbReference type="KEGG" id="sai:Saci_0252"/>
<dbReference type="PATRIC" id="fig|330779.12.peg.249"/>
<dbReference type="eggNOG" id="arCOG02230">
    <property type="taxonomic scope" value="Archaea"/>
</dbReference>
<dbReference type="HOGENOM" id="CLU_081378_1_1_2"/>
<dbReference type="UniPathway" id="UPA00048">
    <property type="reaction ID" value="UER00071"/>
</dbReference>
<dbReference type="Proteomes" id="UP000001018">
    <property type="component" value="Chromosome"/>
</dbReference>
<dbReference type="GO" id="GO:0003861">
    <property type="term" value="F:3-isopropylmalate dehydratase activity"/>
    <property type="evidence" value="ECO:0007669"/>
    <property type="project" value="UniProtKB-UniRule"/>
</dbReference>
<dbReference type="GO" id="GO:0009098">
    <property type="term" value="P:L-leucine biosynthetic process"/>
    <property type="evidence" value="ECO:0007669"/>
    <property type="project" value="UniProtKB-UniRule"/>
</dbReference>
<dbReference type="CDD" id="cd01577">
    <property type="entry name" value="IPMI_Swivel"/>
    <property type="match status" value="1"/>
</dbReference>
<dbReference type="Gene3D" id="3.20.19.10">
    <property type="entry name" value="Aconitase, domain 4"/>
    <property type="match status" value="1"/>
</dbReference>
<dbReference type="HAMAP" id="MF_01032">
    <property type="entry name" value="LeuD_type2"/>
    <property type="match status" value="1"/>
</dbReference>
<dbReference type="InterPro" id="IPR015928">
    <property type="entry name" value="Aconitase/3IPM_dehydase_swvl"/>
</dbReference>
<dbReference type="InterPro" id="IPR000573">
    <property type="entry name" value="AconitaseA/IPMdHydase_ssu_swvl"/>
</dbReference>
<dbReference type="InterPro" id="IPR033940">
    <property type="entry name" value="IPMI_Swivel"/>
</dbReference>
<dbReference type="InterPro" id="IPR050075">
    <property type="entry name" value="LeuD"/>
</dbReference>
<dbReference type="InterPro" id="IPR011827">
    <property type="entry name" value="LeuD_type2/HacB/DmdB"/>
</dbReference>
<dbReference type="NCBIfam" id="TIGR02087">
    <property type="entry name" value="LEUD_arch"/>
    <property type="match status" value="1"/>
</dbReference>
<dbReference type="PANTHER" id="PTHR43345:SF2">
    <property type="entry name" value="3-ISOPROPYLMALATE DEHYDRATASE SMALL SUBUNIT 1"/>
    <property type="match status" value="1"/>
</dbReference>
<dbReference type="PANTHER" id="PTHR43345">
    <property type="entry name" value="3-ISOPROPYLMALATE DEHYDRATASE SMALL SUBUNIT 2-RELATED-RELATED"/>
    <property type="match status" value="1"/>
</dbReference>
<dbReference type="Pfam" id="PF00694">
    <property type="entry name" value="Aconitase_C"/>
    <property type="match status" value="1"/>
</dbReference>
<dbReference type="SUPFAM" id="SSF52016">
    <property type="entry name" value="LeuD/IlvD-like"/>
    <property type="match status" value="1"/>
</dbReference>
<gene>
    <name evidence="1" type="primary">leuD</name>
    <name type="ordered locus">Saci_0252</name>
</gene>
<feature type="chain" id="PRO_0000141951" description="3-isopropylmalate dehydratase small subunit">
    <location>
        <begin position="1"/>
        <end position="161"/>
    </location>
</feature>
<keyword id="KW-0028">Amino-acid biosynthesis</keyword>
<keyword id="KW-0100">Branched-chain amino acid biosynthesis</keyword>
<keyword id="KW-0432">Leucine biosynthesis</keyword>
<keyword id="KW-0456">Lyase</keyword>
<keyword id="KW-1185">Reference proteome</keyword>
<evidence type="ECO:0000255" key="1">
    <source>
        <dbReference type="HAMAP-Rule" id="MF_01032"/>
    </source>
</evidence>
<accession>Q4JC10</accession>